<dbReference type="EMBL" id="AL445565">
    <property type="protein sequence ID" value="CAC13760.1"/>
    <property type="molecule type" value="Genomic_DNA"/>
</dbReference>
<dbReference type="PIR" id="C90585">
    <property type="entry name" value="C90585"/>
</dbReference>
<dbReference type="RefSeq" id="WP_010925388.1">
    <property type="nucleotide sequence ID" value="NC_002771.1"/>
</dbReference>
<dbReference type="SMR" id="Q98PY2"/>
<dbReference type="STRING" id="272635.gene:17577194"/>
<dbReference type="KEGG" id="mpu:MYPU_5870"/>
<dbReference type="eggNOG" id="COG0088">
    <property type="taxonomic scope" value="Bacteria"/>
</dbReference>
<dbReference type="HOGENOM" id="CLU_041575_2_0_14"/>
<dbReference type="BioCyc" id="MPUL272635:G1GT6-599-MONOMER"/>
<dbReference type="Proteomes" id="UP000000528">
    <property type="component" value="Chromosome"/>
</dbReference>
<dbReference type="GO" id="GO:1990904">
    <property type="term" value="C:ribonucleoprotein complex"/>
    <property type="evidence" value="ECO:0007669"/>
    <property type="project" value="UniProtKB-KW"/>
</dbReference>
<dbReference type="GO" id="GO:0005840">
    <property type="term" value="C:ribosome"/>
    <property type="evidence" value="ECO:0007669"/>
    <property type="project" value="UniProtKB-KW"/>
</dbReference>
<dbReference type="GO" id="GO:0019843">
    <property type="term" value="F:rRNA binding"/>
    <property type="evidence" value="ECO:0007669"/>
    <property type="project" value="UniProtKB-UniRule"/>
</dbReference>
<dbReference type="GO" id="GO:0003735">
    <property type="term" value="F:structural constituent of ribosome"/>
    <property type="evidence" value="ECO:0007669"/>
    <property type="project" value="InterPro"/>
</dbReference>
<dbReference type="GO" id="GO:0006412">
    <property type="term" value="P:translation"/>
    <property type="evidence" value="ECO:0007669"/>
    <property type="project" value="UniProtKB-UniRule"/>
</dbReference>
<dbReference type="Gene3D" id="3.40.1370.10">
    <property type="match status" value="1"/>
</dbReference>
<dbReference type="HAMAP" id="MF_01328_B">
    <property type="entry name" value="Ribosomal_uL4_B"/>
    <property type="match status" value="1"/>
</dbReference>
<dbReference type="InterPro" id="IPR002136">
    <property type="entry name" value="Ribosomal_uL4"/>
</dbReference>
<dbReference type="InterPro" id="IPR013005">
    <property type="entry name" value="Ribosomal_uL4-like"/>
</dbReference>
<dbReference type="InterPro" id="IPR023574">
    <property type="entry name" value="Ribosomal_uL4_dom_sf"/>
</dbReference>
<dbReference type="NCBIfam" id="TIGR03953">
    <property type="entry name" value="rplD_bact"/>
    <property type="match status" value="1"/>
</dbReference>
<dbReference type="PANTHER" id="PTHR10746">
    <property type="entry name" value="50S RIBOSOMAL PROTEIN L4"/>
    <property type="match status" value="1"/>
</dbReference>
<dbReference type="PANTHER" id="PTHR10746:SF6">
    <property type="entry name" value="LARGE RIBOSOMAL SUBUNIT PROTEIN UL4M"/>
    <property type="match status" value="1"/>
</dbReference>
<dbReference type="Pfam" id="PF00573">
    <property type="entry name" value="Ribosomal_L4"/>
    <property type="match status" value="1"/>
</dbReference>
<dbReference type="SUPFAM" id="SSF52166">
    <property type="entry name" value="Ribosomal protein L4"/>
    <property type="match status" value="1"/>
</dbReference>
<name>RL4_MYCPU</name>
<reference key="1">
    <citation type="journal article" date="2001" name="Nucleic Acids Res.">
        <title>The complete genome sequence of the murine respiratory pathogen Mycoplasma pulmonis.</title>
        <authorList>
            <person name="Chambaud I."/>
            <person name="Heilig R."/>
            <person name="Ferris S."/>
            <person name="Barbe V."/>
            <person name="Samson D."/>
            <person name="Galisson F."/>
            <person name="Moszer I."/>
            <person name="Dybvig K."/>
            <person name="Wroblewski H."/>
            <person name="Viari A."/>
            <person name="Rocha E.P.C."/>
            <person name="Blanchard A."/>
        </authorList>
    </citation>
    <scope>NUCLEOTIDE SEQUENCE [LARGE SCALE GENOMIC DNA]</scope>
    <source>
        <strain>UAB CTIP</strain>
    </source>
</reference>
<protein>
    <recommendedName>
        <fullName evidence="1">Large ribosomal subunit protein uL4</fullName>
    </recommendedName>
    <alternativeName>
        <fullName evidence="3">50S ribosomal protein L4</fullName>
    </alternativeName>
</protein>
<organism>
    <name type="scientific">Mycoplasmopsis pulmonis (strain UAB CTIP)</name>
    <name type="common">Mycoplasma pulmonis</name>
    <dbReference type="NCBI Taxonomy" id="272635"/>
    <lineage>
        <taxon>Bacteria</taxon>
        <taxon>Bacillati</taxon>
        <taxon>Mycoplasmatota</taxon>
        <taxon>Mycoplasmoidales</taxon>
        <taxon>Metamycoplasmataceae</taxon>
        <taxon>Mycoplasmopsis</taxon>
    </lineage>
</organism>
<gene>
    <name evidence="1" type="primary">rplD</name>
    <name type="ordered locus">MYPU_5870</name>
</gene>
<keyword id="KW-1185">Reference proteome</keyword>
<keyword id="KW-0687">Ribonucleoprotein</keyword>
<keyword id="KW-0689">Ribosomal protein</keyword>
<keyword id="KW-0694">RNA-binding</keyword>
<keyword id="KW-0699">rRNA-binding</keyword>
<feature type="chain" id="PRO_0000129245" description="Large ribosomal subunit protein uL4">
    <location>
        <begin position="1"/>
        <end position="292"/>
    </location>
</feature>
<feature type="region of interest" description="Disordered" evidence="2">
    <location>
        <begin position="1"/>
        <end position="59"/>
    </location>
</feature>
<feature type="region of interest" description="Disordered" evidence="2">
    <location>
        <begin position="132"/>
        <end position="158"/>
    </location>
</feature>
<feature type="compositionally biased region" description="Basic and acidic residues" evidence="2">
    <location>
        <begin position="1"/>
        <end position="33"/>
    </location>
</feature>
<feature type="compositionally biased region" description="Basic and acidic residues" evidence="2">
    <location>
        <begin position="42"/>
        <end position="51"/>
    </location>
</feature>
<accession>Q98PY2</accession>
<sequence>MVEVKKTTKTKSTEEKAPKITKATKEKTSDKTALKAKTPKTKVSDKAESTPKKASVKTSAKAEKINVEKTEKVEKVNVEKVSIKRESSSKDVQKADFSNIKELNSKIFEFEKNYDQAIFDCILSERASRRQGTHKVKNRAEVSGTGKKPWKQKGTGKARAGSLRNPIFVGGGRAFGPSVNRNYKISINKKVRLNALMASLFALAKSNSVLLKTFSLEKPSTKDLVEELRKINASNLKRILLVSDDKNIFLSARNLKNVKVTKVTSLMIEDLVAADLLILSNENIKYLEGLIK</sequence>
<evidence type="ECO:0000255" key="1">
    <source>
        <dbReference type="HAMAP-Rule" id="MF_01328"/>
    </source>
</evidence>
<evidence type="ECO:0000256" key="2">
    <source>
        <dbReference type="SAM" id="MobiDB-lite"/>
    </source>
</evidence>
<evidence type="ECO:0000305" key="3"/>
<comment type="function">
    <text evidence="1">One of the primary rRNA binding proteins, this protein initially binds near the 5'-end of the 23S rRNA. It is important during the early stages of 50S assembly. It makes multiple contacts with different domains of the 23S rRNA in the assembled 50S subunit and ribosome.</text>
</comment>
<comment type="function">
    <text evidence="1">Forms part of the polypeptide exit tunnel.</text>
</comment>
<comment type="subunit">
    <text evidence="1">Part of the 50S ribosomal subunit.</text>
</comment>
<comment type="similarity">
    <text evidence="1">Belongs to the universal ribosomal protein uL4 family.</text>
</comment>
<proteinExistence type="inferred from homology"/>